<feature type="signal peptide" evidence="3">
    <location>
        <begin position="1"/>
        <end position="27"/>
    </location>
</feature>
<feature type="chain" id="PRO_0000030720" description="E3 ubiquitin-protein ligase RNF130" evidence="1">
    <location>
        <begin position="28"/>
        <end position="419"/>
    </location>
</feature>
<feature type="topological domain" description="Extracellular" evidence="3">
    <location>
        <begin position="28"/>
        <end position="194"/>
    </location>
</feature>
<feature type="transmembrane region" description="Helical" evidence="3">
    <location>
        <begin position="195"/>
        <end position="217"/>
    </location>
</feature>
<feature type="topological domain" description="Cytoplasmic" evidence="3">
    <location>
        <begin position="218"/>
        <end position="419"/>
    </location>
</feature>
<feature type="domain" description="PA">
    <location>
        <begin position="105"/>
        <end position="176"/>
    </location>
</feature>
<feature type="zinc finger region" description="RING-type" evidence="4">
    <location>
        <begin position="264"/>
        <end position="305"/>
    </location>
</feature>
<feature type="modified residue" description="Phosphoserine" evidence="2">
    <location>
        <position position="341"/>
    </location>
</feature>
<feature type="glycosylation site" description="N-linked (GlcNAc...) asparagine" evidence="3">
    <location>
        <position position="29"/>
    </location>
</feature>
<feature type="glycosylation site" description="N-linked (GlcNAc...) asparagine" evidence="3">
    <location>
        <position position="40"/>
    </location>
</feature>
<feature type="glycosylation site" description="N-linked (GlcNAc...) asparagine" evidence="3">
    <location>
        <position position="112"/>
    </location>
</feature>
<feature type="glycosylation site" description="N-linked (GlcNAc...) asparagine" evidence="3">
    <location>
        <position position="135"/>
    </location>
</feature>
<feature type="glycosylation site" description="N-linked (GlcNAc...) asparagine" evidence="3">
    <location>
        <position position="172"/>
    </location>
</feature>
<feature type="glycosylation site" description="N-linked (GlcNAc...) asparagine" evidence="3">
    <location>
        <position position="189"/>
    </location>
</feature>
<accession>Q6Y290</accession>
<dbReference type="EC" id="2.3.2.27" evidence="2"/>
<dbReference type="EMBL" id="AY190520">
    <property type="protein sequence ID" value="AAO31973.1"/>
    <property type="molecule type" value="mRNA"/>
</dbReference>
<dbReference type="RefSeq" id="NP_001032747.1">
    <property type="nucleotide sequence ID" value="NM_001037658.2"/>
</dbReference>
<dbReference type="SMR" id="Q6Y290"/>
<dbReference type="FunCoup" id="Q6Y290">
    <property type="interactions" value="1556"/>
</dbReference>
<dbReference type="STRING" id="10116.ENSRNOP00000066033"/>
<dbReference type="GlyCosmos" id="Q6Y290">
    <property type="glycosylation" value="6 sites, No reported glycans"/>
</dbReference>
<dbReference type="GlyGen" id="Q6Y290">
    <property type="glycosylation" value="6 sites"/>
</dbReference>
<dbReference type="PhosphoSitePlus" id="Q6Y290"/>
<dbReference type="GeneID" id="652955"/>
<dbReference type="KEGG" id="rno:652955"/>
<dbReference type="AGR" id="RGD:1562041"/>
<dbReference type="CTD" id="55819"/>
<dbReference type="RGD" id="1562041">
    <property type="gene designation" value="Rnf130"/>
</dbReference>
<dbReference type="InParanoid" id="Q6Y290"/>
<dbReference type="PhylomeDB" id="Q6Y290"/>
<dbReference type="Reactome" id="R-RNO-983168">
    <property type="pathway name" value="Antigen processing: Ubiquitination &amp; Proteasome degradation"/>
</dbReference>
<dbReference type="UniPathway" id="UPA00143"/>
<dbReference type="PRO" id="PR:Q6Y290"/>
<dbReference type="Proteomes" id="UP000002494">
    <property type="component" value="Unplaced"/>
</dbReference>
<dbReference type="GO" id="GO:0005737">
    <property type="term" value="C:cytoplasm"/>
    <property type="evidence" value="ECO:0000250"/>
    <property type="project" value="UniProtKB"/>
</dbReference>
<dbReference type="GO" id="GO:0016020">
    <property type="term" value="C:membrane"/>
    <property type="evidence" value="ECO:0007669"/>
    <property type="project" value="UniProtKB-SubCell"/>
</dbReference>
<dbReference type="GO" id="GO:0061630">
    <property type="term" value="F:ubiquitin protein ligase activity"/>
    <property type="evidence" value="ECO:0000318"/>
    <property type="project" value="GO_Central"/>
</dbReference>
<dbReference type="GO" id="GO:0004842">
    <property type="term" value="F:ubiquitin-protein transferase activity"/>
    <property type="evidence" value="ECO:0000250"/>
    <property type="project" value="UniProtKB"/>
</dbReference>
<dbReference type="GO" id="GO:0008270">
    <property type="term" value="F:zinc ion binding"/>
    <property type="evidence" value="ECO:0007669"/>
    <property type="project" value="UniProtKB-KW"/>
</dbReference>
<dbReference type="GO" id="GO:0006915">
    <property type="term" value="P:apoptotic process"/>
    <property type="evidence" value="ECO:0007669"/>
    <property type="project" value="UniProtKB-KW"/>
</dbReference>
<dbReference type="GO" id="GO:0012501">
    <property type="term" value="P:programmed cell death"/>
    <property type="evidence" value="ECO:0000250"/>
    <property type="project" value="UniProtKB"/>
</dbReference>
<dbReference type="GO" id="GO:0016567">
    <property type="term" value="P:protein ubiquitination"/>
    <property type="evidence" value="ECO:0007669"/>
    <property type="project" value="UniProtKB-UniPathway"/>
</dbReference>
<dbReference type="GO" id="GO:0006511">
    <property type="term" value="P:ubiquitin-dependent protein catabolic process"/>
    <property type="evidence" value="ECO:0000318"/>
    <property type="project" value="GO_Central"/>
</dbReference>
<dbReference type="CDD" id="cd02122">
    <property type="entry name" value="PA_GRAIL_like"/>
    <property type="match status" value="1"/>
</dbReference>
<dbReference type="CDD" id="cd16803">
    <property type="entry name" value="RING-H2_RNF130"/>
    <property type="match status" value="1"/>
</dbReference>
<dbReference type="FunFam" id="3.30.40.10:FF:000009">
    <property type="entry name" value="E3 ubiquitin-protein ligase RNF130"/>
    <property type="match status" value="1"/>
</dbReference>
<dbReference type="FunFam" id="3.50.30.30:FF:000011">
    <property type="entry name" value="E3 ubiquitin-protein ligase RNF130"/>
    <property type="match status" value="1"/>
</dbReference>
<dbReference type="Gene3D" id="3.50.30.30">
    <property type="match status" value="1"/>
</dbReference>
<dbReference type="Gene3D" id="3.30.40.10">
    <property type="entry name" value="Zinc/RING finger domain, C3HC4 (zinc finger)"/>
    <property type="match status" value="1"/>
</dbReference>
<dbReference type="InterPro" id="IPR046450">
    <property type="entry name" value="PA_dom_sf"/>
</dbReference>
<dbReference type="InterPro" id="IPR003137">
    <property type="entry name" value="PA_domain"/>
</dbReference>
<dbReference type="InterPro" id="IPR051834">
    <property type="entry name" value="RING_finger_E3_ligase"/>
</dbReference>
<dbReference type="InterPro" id="IPR001841">
    <property type="entry name" value="Znf_RING"/>
</dbReference>
<dbReference type="InterPro" id="IPR013083">
    <property type="entry name" value="Znf_RING/FYVE/PHD"/>
</dbReference>
<dbReference type="PANTHER" id="PTHR45931:SF21">
    <property type="entry name" value="RING FINGER PROTEIN 130"/>
    <property type="match status" value="1"/>
</dbReference>
<dbReference type="PANTHER" id="PTHR45931">
    <property type="entry name" value="SI:CH211-59O9.10"/>
    <property type="match status" value="1"/>
</dbReference>
<dbReference type="Pfam" id="PF02225">
    <property type="entry name" value="PA"/>
    <property type="match status" value="1"/>
</dbReference>
<dbReference type="Pfam" id="PF13639">
    <property type="entry name" value="zf-RING_2"/>
    <property type="match status" value="1"/>
</dbReference>
<dbReference type="SMART" id="SM00184">
    <property type="entry name" value="RING"/>
    <property type="match status" value="1"/>
</dbReference>
<dbReference type="SUPFAM" id="SSF52025">
    <property type="entry name" value="PA domain"/>
    <property type="match status" value="1"/>
</dbReference>
<dbReference type="SUPFAM" id="SSF57850">
    <property type="entry name" value="RING/U-box"/>
    <property type="match status" value="1"/>
</dbReference>
<dbReference type="PROSITE" id="PS50089">
    <property type="entry name" value="ZF_RING_2"/>
    <property type="match status" value="1"/>
</dbReference>
<keyword id="KW-0053">Apoptosis</keyword>
<keyword id="KW-0963">Cytoplasm</keyword>
<keyword id="KW-0325">Glycoprotein</keyword>
<keyword id="KW-0472">Membrane</keyword>
<keyword id="KW-0479">Metal-binding</keyword>
<keyword id="KW-0597">Phosphoprotein</keyword>
<keyword id="KW-1185">Reference proteome</keyword>
<keyword id="KW-0732">Signal</keyword>
<keyword id="KW-0808">Transferase</keyword>
<keyword id="KW-0812">Transmembrane</keyword>
<keyword id="KW-1133">Transmembrane helix</keyword>
<keyword id="KW-0833">Ubl conjugation pathway</keyword>
<keyword id="KW-0862">Zinc</keyword>
<keyword id="KW-0863">Zinc-finger</keyword>
<sequence>MSGAARAGPARLAALALLTCSLWPTRADNASQEYYTALINVTVQEPGRGTPLTFRIDRGRYGLDSPKAEVRGQVLAPLPIHGVADHLGCDPQTRFFVPPNIKQWIALLQRGNCTFKEKISRAAFHNAVAVVIYNNKSKEEPVTMTHPGTGDIIAVMITELRGKDILSYLEKNISVQMTIAVGTRMPPKNFSRGSLVFVSISFIVLMIISSAWLIFYFIQKIRYTNARDRNQRRLGDAAKKAISKLTTRTVKKGDKETDPDFDHCAVCIESYKQNDVVRVLPCKHVFHKSCVDPWLSEHCTCPMCKLNILKALGIVPNLPCTDNVAFDMERLTRTQAVNRRSALGDLANDSSLGLEPLRTSGISPLPQDGELTPRTGEINIAVTKEWFIIASFGLLSALTLCYMIIRATASLNANEVEWF</sequence>
<organism>
    <name type="scientific">Rattus norvegicus</name>
    <name type="common">Rat</name>
    <dbReference type="NCBI Taxonomy" id="10116"/>
    <lineage>
        <taxon>Eukaryota</taxon>
        <taxon>Metazoa</taxon>
        <taxon>Chordata</taxon>
        <taxon>Craniata</taxon>
        <taxon>Vertebrata</taxon>
        <taxon>Euteleostomi</taxon>
        <taxon>Mammalia</taxon>
        <taxon>Eutheria</taxon>
        <taxon>Euarchontoglires</taxon>
        <taxon>Glires</taxon>
        <taxon>Rodentia</taxon>
        <taxon>Myomorpha</taxon>
        <taxon>Muroidea</taxon>
        <taxon>Muridae</taxon>
        <taxon>Murinae</taxon>
        <taxon>Rattus</taxon>
    </lineage>
</organism>
<reference evidence="6 7" key="1">
    <citation type="journal article" date="2004" name="Biol. Reprod.">
        <title>Goliath, a ring-H2 mitochondrial protein, regulated by luteinizing hormone/human chorionic gonadotropin in rat Leydig cells.</title>
        <authorList>
            <person name="Guais A."/>
            <person name="Solhonne B."/>
            <person name="Melaine N."/>
            <person name="Guellaeen G."/>
            <person name="Bulle F."/>
        </authorList>
    </citation>
    <scope>NUCLEOTIDE SEQUENCE [MRNA]</scope>
    <scope>INDUCTION</scope>
    <scope>SUBCELLULAR LOCATION</scope>
    <scope>TISSUE SPECIFICITY</scope>
    <source>
        <strain evidence="7">Sprague-Dawley</strain>
        <tissue evidence="7">Liver</tissue>
    </source>
</reference>
<evidence type="ECO:0000250" key="1"/>
<evidence type="ECO:0000250" key="2">
    <source>
        <dbReference type="UniProtKB" id="Q86XS8"/>
    </source>
</evidence>
<evidence type="ECO:0000255" key="3"/>
<evidence type="ECO:0000255" key="4">
    <source>
        <dbReference type="PROSITE-ProRule" id="PRU00175"/>
    </source>
</evidence>
<evidence type="ECO:0000269" key="5">
    <source>
    </source>
</evidence>
<evidence type="ECO:0000305" key="6"/>
<evidence type="ECO:0000312" key="7">
    <source>
        <dbReference type="EMBL" id="AAO31973.1"/>
    </source>
</evidence>
<protein>
    <recommendedName>
        <fullName>E3 ubiquitin-protein ligase RNF130</fullName>
        <ecNumber evidence="2">2.3.2.27</ecNumber>
    </recommendedName>
    <alternativeName>
        <fullName>Goliath homolog</fullName>
        <shortName>R-goliath</shortName>
    </alternativeName>
    <alternativeName>
        <fullName>RING finger protein 130</fullName>
    </alternativeName>
</protein>
<proteinExistence type="evidence at protein level"/>
<name>GOLI_RAT</name>
<gene>
    <name evidence="2" type="primary">Rnf130</name>
</gene>
<comment type="function">
    <text evidence="1">Acts as an E3 ubiquitin-protein ligase (By similarity). May have a role during the programmed cell death of hematopoietic cells.</text>
</comment>
<comment type="catalytic activity">
    <reaction evidence="2">
        <text>S-ubiquitinyl-[E2 ubiquitin-conjugating enzyme]-L-cysteine + [acceptor protein]-L-lysine = [E2 ubiquitin-conjugating enzyme]-L-cysteine + N(6)-ubiquitinyl-[acceptor protein]-L-lysine.</text>
        <dbReference type="EC" id="2.3.2.27"/>
    </reaction>
</comment>
<comment type="pathway">
    <text>Protein modification; protein ubiquitination.</text>
</comment>
<comment type="subcellular location">
    <subcellularLocation>
        <location evidence="6">Membrane</location>
        <topology evidence="6">Single-pass type I membrane protein</topology>
    </subcellularLocation>
    <subcellularLocation>
        <location evidence="2">Cytoplasm</location>
    </subcellularLocation>
    <text evidence="5">May be mitochondrial in the R2C Leydig cell line.</text>
</comment>
<comment type="tissue specificity">
    <text evidence="5">In testis sections, expressed in interstitial tissue and seminiferous tubules. In tubules, expression is mainly in postmeiotic germ cells and to a much lesser extent in Sertoli cells (at protein level). Expressed at high levels in liver, lung, stomach, heart and thymus.</text>
</comment>
<comment type="induction">
    <text evidence="5">Regulated by lutenising hormone (LH) in Leydig cells but not in germ cells.</text>
</comment>